<keyword id="KW-0067">ATP-binding</keyword>
<keyword id="KW-0227">DNA damage</keyword>
<keyword id="KW-0234">DNA repair</keyword>
<keyword id="KW-0238">DNA-binding</keyword>
<keyword id="KW-0269">Exonuclease</keyword>
<keyword id="KW-0347">Helicase</keyword>
<keyword id="KW-0378">Hydrolase</keyword>
<keyword id="KW-0413">Isomerase</keyword>
<keyword id="KW-0540">Nuclease</keyword>
<keyword id="KW-0547">Nucleotide-binding</keyword>
<sequence>MSSTKWTDEQRQAIFTKNCNLLVAAGAGAGKTAVLVQRIIEKILDKEEPIDIDKLLVVTFTNAAAAEMRERIGDAISKGLDEDPESKVLRKQLTLLNKSNIMTIHSFCLQVIKNNFHTIEIDPNFRICDETEGILMKQEAIDELFDELYEIENEDFINLVESYASRKDIRLQEVVLELHRFAKSAPFPYTWLLNMAEGFNVGENFNFEETLWADMIMEDMKVLLHGFKNMLQQSIDVILNSEGIDYYYEPFKMDLSFINSLLEKSSFKEFRGEIIAYDFPKLPLKRNKDADKEAKERVKKLRDRVKKRIIELRITLNSYENEFTKKEFIFLYPSMKALSNLVILFDKKYEAKKRERDLIDFNDIEHLCLSILTDKNSEGHIIPSDIALNYRKKFAEVLIDEYQDSNLVQEVIMSMVSRVKGYWSFYNGQLIFNEEEINLEEPQIGLDIPNRFMVGDVKQSIYRFRQAKPEIFLDKYNEYSEEEGTKNRKVKLFKNFRSREEVINGVNYLFKQIMSKTIGELDYTEEEALKVGASYGEEVKGEPIELCLMDKKYEISEEVLKEYNVDEEEALDNIQLEGRLVAKKIQKLVGNNLEGGLKVFDRKLGEYRNLQYRDIVILMRATSNWAPVFVEELAKEGIPVFADTNSGYFDTAEIKTMISLLQIIDNPLQDIPLLSVLRSPIASFTDDELIDIRMVNKNITFYECMEIIYRLYKNEKLDSYYSFYIEDENKINKIIKDMNEKLKNKICSFIEKLKLWREKSIHIDIDEFIWFLYVETGYYGYAGALQAGEQRQANLRILFQRAKQYAKTSYKGLFNFINFINKLKFSSGDMGSAKILGENENVVRIMSIHKSKGLEFPVVILSGTGKNFNMMDLNKNILFHRDLGYGPDYVDTERRIAYPSLVKNIIKNKIRLETLSEEMRILYVALTRAREKLIITGLINNMDKTVEDWLNLSEDKNKVPEYAVMSGKTYLDWIGPALIKHKDAVSFREELKMTSELSNIVDDKSKWKIELWNKRELLKEKVEEDEVEISEKIKETLMNLEESDYKEEIYKRLSFKYKYDNASSIPTKLSVSDVKKQFILDEKENTEELFKKLELRKPMFMEEKKKISPSERGTIIHLFMQHLDLKKAENEEDIKEQINRLIEREFITYEQSKVISSYKILKFCRGELGKRILNSNNVNKEMPFSIEIPALEIYKELDKEIYKDEKLIIQGVIDCYFEEEDGLVLLDYKTDYVNDIEEIKNRYEIQIKYYEEALNRITGKNVKDKYLYLFSVDNYIKID</sequence>
<dbReference type="EC" id="3.1.-.-" evidence="1"/>
<dbReference type="EC" id="5.6.2.4" evidence="1"/>
<dbReference type="EMBL" id="CP001581">
    <property type="protein sequence ID" value="ACO86963.1"/>
    <property type="molecule type" value="Genomic_DNA"/>
</dbReference>
<dbReference type="RefSeq" id="WP_012705612.1">
    <property type="nucleotide sequence ID" value="NC_012563.1"/>
</dbReference>
<dbReference type="SMR" id="C1FSA8"/>
<dbReference type="KEGG" id="cby:CLM_0518"/>
<dbReference type="eggNOG" id="COG1074">
    <property type="taxonomic scope" value="Bacteria"/>
</dbReference>
<dbReference type="HOGENOM" id="CLU_001114_3_1_9"/>
<dbReference type="Proteomes" id="UP000001374">
    <property type="component" value="Chromosome"/>
</dbReference>
<dbReference type="GO" id="GO:0005829">
    <property type="term" value="C:cytosol"/>
    <property type="evidence" value="ECO:0007669"/>
    <property type="project" value="TreeGrafter"/>
</dbReference>
<dbReference type="GO" id="GO:0033202">
    <property type="term" value="C:DNA helicase complex"/>
    <property type="evidence" value="ECO:0007669"/>
    <property type="project" value="TreeGrafter"/>
</dbReference>
<dbReference type="GO" id="GO:0043138">
    <property type="term" value="F:3'-5' DNA helicase activity"/>
    <property type="evidence" value="ECO:0007669"/>
    <property type="project" value="UniProtKB-UniRule"/>
</dbReference>
<dbReference type="GO" id="GO:0008408">
    <property type="term" value="F:3'-5' exonuclease activity"/>
    <property type="evidence" value="ECO:0007669"/>
    <property type="project" value="UniProtKB-UniRule"/>
</dbReference>
<dbReference type="GO" id="GO:0005524">
    <property type="term" value="F:ATP binding"/>
    <property type="evidence" value="ECO:0007669"/>
    <property type="project" value="UniProtKB-UniRule"/>
</dbReference>
<dbReference type="GO" id="GO:0016887">
    <property type="term" value="F:ATP hydrolysis activity"/>
    <property type="evidence" value="ECO:0007669"/>
    <property type="project" value="RHEA"/>
</dbReference>
<dbReference type="GO" id="GO:0003690">
    <property type="term" value="F:double-stranded DNA binding"/>
    <property type="evidence" value="ECO:0007669"/>
    <property type="project" value="UniProtKB-UniRule"/>
</dbReference>
<dbReference type="GO" id="GO:0000724">
    <property type="term" value="P:double-strand break repair via homologous recombination"/>
    <property type="evidence" value="ECO:0007669"/>
    <property type="project" value="UniProtKB-UniRule"/>
</dbReference>
<dbReference type="FunFam" id="3.40.50.300:FF:001164">
    <property type="entry name" value="ATP-dependent helicase/nuclease subunit A"/>
    <property type="match status" value="1"/>
</dbReference>
<dbReference type="FunFam" id="3.40.50.300:FF:001196">
    <property type="entry name" value="ATP-dependent helicase/nuclease subunit A"/>
    <property type="match status" value="1"/>
</dbReference>
<dbReference type="FunFam" id="3.40.50.300:FF:001236">
    <property type="entry name" value="ATP-dependent helicase/nuclease subunit A"/>
    <property type="match status" value="1"/>
</dbReference>
<dbReference type="Gene3D" id="3.90.320.10">
    <property type="match status" value="1"/>
</dbReference>
<dbReference type="Gene3D" id="3.40.50.300">
    <property type="entry name" value="P-loop containing nucleotide triphosphate hydrolases"/>
    <property type="match status" value="4"/>
</dbReference>
<dbReference type="HAMAP" id="MF_01451">
    <property type="entry name" value="AddA"/>
    <property type="match status" value="1"/>
</dbReference>
<dbReference type="InterPro" id="IPR014152">
    <property type="entry name" value="AddA"/>
</dbReference>
<dbReference type="InterPro" id="IPR014017">
    <property type="entry name" value="DNA_helicase_UvrD-like_C"/>
</dbReference>
<dbReference type="InterPro" id="IPR000212">
    <property type="entry name" value="DNA_helicase_UvrD/REP"/>
</dbReference>
<dbReference type="InterPro" id="IPR027417">
    <property type="entry name" value="P-loop_NTPase"/>
</dbReference>
<dbReference type="InterPro" id="IPR011604">
    <property type="entry name" value="PDDEXK-like_dom_sf"/>
</dbReference>
<dbReference type="InterPro" id="IPR038726">
    <property type="entry name" value="PDDEXK_AddAB-type"/>
</dbReference>
<dbReference type="InterPro" id="IPR011335">
    <property type="entry name" value="Restrct_endonuc-II-like"/>
</dbReference>
<dbReference type="InterPro" id="IPR014016">
    <property type="entry name" value="UvrD-like_ATP-bd"/>
</dbReference>
<dbReference type="NCBIfam" id="TIGR02785">
    <property type="entry name" value="addA_Gpos"/>
    <property type="match status" value="1"/>
</dbReference>
<dbReference type="PANTHER" id="PTHR11070:SF48">
    <property type="entry name" value="ATP-DEPENDENT HELICASE_NUCLEASE SUBUNIT A"/>
    <property type="match status" value="1"/>
</dbReference>
<dbReference type="PANTHER" id="PTHR11070">
    <property type="entry name" value="UVRD / RECB / PCRA DNA HELICASE FAMILY MEMBER"/>
    <property type="match status" value="1"/>
</dbReference>
<dbReference type="Pfam" id="PF12705">
    <property type="entry name" value="PDDEXK_1"/>
    <property type="match status" value="1"/>
</dbReference>
<dbReference type="Pfam" id="PF00580">
    <property type="entry name" value="UvrD-helicase"/>
    <property type="match status" value="1"/>
</dbReference>
<dbReference type="Pfam" id="PF13361">
    <property type="entry name" value="UvrD_C"/>
    <property type="match status" value="1"/>
</dbReference>
<dbReference type="SUPFAM" id="SSF52540">
    <property type="entry name" value="P-loop containing nucleoside triphosphate hydrolases"/>
    <property type="match status" value="1"/>
</dbReference>
<dbReference type="SUPFAM" id="SSF52980">
    <property type="entry name" value="Restriction endonuclease-like"/>
    <property type="match status" value="1"/>
</dbReference>
<dbReference type="PROSITE" id="PS51198">
    <property type="entry name" value="UVRD_HELICASE_ATP_BIND"/>
    <property type="match status" value="1"/>
</dbReference>
<dbReference type="PROSITE" id="PS51217">
    <property type="entry name" value="UVRD_HELICASE_CTER"/>
    <property type="match status" value="1"/>
</dbReference>
<protein>
    <recommendedName>
        <fullName evidence="1">ATP-dependent helicase/nuclease subunit A</fullName>
        <ecNumber evidence="1">3.1.-.-</ecNumber>
        <ecNumber evidence="1">5.6.2.4</ecNumber>
    </recommendedName>
    <alternativeName>
        <fullName evidence="1">ATP-dependent helicase/nuclease AddA</fullName>
    </alternativeName>
    <alternativeName>
        <fullName evidence="1">DNA 3'-5' helicase AddA</fullName>
    </alternativeName>
</protein>
<organism>
    <name type="scientific">Clostridium botulinum (strain Kyoto / Type A2)</name>
    <dbReference type="NCBI Taxonomy" id="536232"/>
    <lineage>
        <taxon>Bacteria</taxon>
        <taxon>Bacillati</taxon>
        <taxon>Bacillota</taxon>
        <taxon>Clostridia</taxon>
        <taxon>Eubacteriales</taxon>
        <taxon>Clostridiaceae</taxon>
        <taxon>Clostridium</taxon>
    </lineage>
</organism>
<reference key="1">
    <citation type="submission" date="2008-10" db="EMBL/GenBank/DDBJ databases">
        <title>Genome sequence of Clostridium botulinum A2 Kyoto.</title>
        <authorList>
            <person name="Shrivastava S."/>
            <person name="Brinkac L.M."/>
            <person name="Brown J.L."/>
            <person name="Bruce D."/>
            <person name="Detter C.C."/>
            <person name="Johnson E.A."/>
            <person name="Munk C.A."/>
            <person name="Smith L.A."/>
            <person name="Smith T.J."/>
            <person name="Sutton G."/>
            <person name="Brettin T.S."/>
        </authorList>
    </citation>
    <scope>NUCLEOTIDE SEQUENCE [LARGE SCALE GENOMIC DNA]</scope>
    <source>
        <strain>Kyoto / Type A2</strain>
    </source>
</reference>
<gene>
    <name evidence="1" type="primary">addA</name>
    <name type="ordered locus">CLM_0518</name>
</gene>
<comment type="function">
    <text evidence="1">The heterodimer acts as both an ATP-dependent DNA helicase and an ATP-dependent, dual-direction single-stranded exonuclease. Recognizes the chi site generating a DNA molecule suitable for the initiation of homologous recombination. The AddA nuclease domain is required for chi fragment generation; this subunit has the helicase and 3' -&gt; 5' nuclease activities.</text>
</comment>
<comment type="catalytic activity">
    <reaction evidence="1">
        <text>Couples ATP hydrolysis with the unwinding of duplex DNA by translocating in the 3'-5' direction.</text>
        <dbReference type="EC" id="5.6.2.4"/>
    </reaction>
</comment>
<comment type="catalytic activity">
    <reaction evidence="1">
        <text>ATP + H2O = ADP + phosphate + H(+)</text>
        <dbReference type="Rhea" id="RHEA:13065"/>
        <dbReference type="ChEBI" id="CHEBI:15377"/>
        <dbReference type="ChEBI" id="CHEBI:15378"/>
        <dbReference type="ChEBI" id="CHEBI:30616"/>
        <dbReference type="ChEBI" id="CHEBI:43474"/>
        <dbReference type="ChEBI" id="CHEBI:456216"/>
        <dbReference type="EC" id="5.6.2.4"/>
    </reaction>
</comment>
<comment type="cofactor">
    <cofactor evidence="1">
        <name>Mg(2+)</name>
        <dbReference type="ChEBI" id="CHEBI:18420"/>
    </cofactor>
</comment>
<comment type="subunit">
    <text evidence="1">Heterodimer of AddA and AddB/RexB.</text>
</comment>
<comment type="similarity">
    <text evidence="1">Belongs to the helicase family. AddA subfamily.</text>
</comment>
<accession>C1FSA8</accession>
<name>ADDA_CLOBJ</name>
<feature type="chain" id="PRO_1000185004" description="ATP-dependent helicase/nuclease subunit A">
    <location>
        <begin position="1"/>
        <end position="1279"/>
    </location>
</feature>
<feature type="domain" description="UvrD-like helicase ATP-binding" evidence="1">
    <location>
        <begin position="4"/>
        <end position="499"/>
    </location>
</feature>
<feature type="domain" description="UvrD-like helicase C-terminal" evidence="1">
    <location>
        <begin position="526"/>
        <end position="853"/>
    </location>
</feature>
<feature type="binding site" evidence="1">
    <location>
        <begin position="25"/>
        <end position="32"/>
    </location>
    <ligand>
        <name>ATP</name>
        <dbReference type="ChEBI" id="CHEBI:30616"/>
    </ligand>
</feature>
<evidence type="ECO:0000255" key="1">
    <source>
        <dbReference type="HAMAP-Rule" id="MF_01451"/>
    </source>
</evidence>
<proteinExistence type="inferred from homology"/>